<proteinExistence type="evidence at protein level"/>
<protein>
    <recommendedName>
        <fullName evidence="1">Nicotinate phosphoribosyltransferase</fullName>
        <shortName evidence="1">NAPRTase</shortName>
        <ecNumber evidence="1">6.3.4.21</ecNumber>
    </recommendedName>
</protein>
<comment type="function">
    <text evidence="1">Catalyzes the synthesis of beta-nicotinate D-ribonucleotide from nicotinate and 5-phospho-D-ribose 1-phosphate at the expense of ATP.</text>
</comment>
<comment type="catalytic activity">
    <reaction evidence="1">
        <text>nicotinate + 5-phospho-alpha-D-ribose 1-diphosphate + ATP + H2O = nicotinate beta-D-ribonucleotide + ADP + phosphate + diphosphate</text>
        <dbReference type="Rhea" id="RHEA:36163"/>
        <dbReference type="ChEBI" id="CHEBI:15377"/>
        <dbReference type="ChEBI" id="CHEBI:30616"/>
        <dbReference type="ChEBI" id="CHEBI:32544"/>
        <dbReference type="ChEBI" id="CHEBI:33019"/>
        <dbReference type="ChEBI" id="CHEBI:43474"/>
        <dbReference type="ChEBI" id="CHEBI:57502"/>
        <dbReference type="ChEBI" id="CHEBI:58017"/>
        <dbReference type="ChEBI" id="CHEBI:456216"/>
        <dbReference type="EC" id="6.3.4.21"/>
    </reaction>
</comment>
<comment type="pathway">
    <text evidence="1">Cofactor biosynthesis; NAD(+) biosynthesis; nicotinate D-ribonucleotide from nicotinate: step 1/1.</text>
</comment>
<comment type="PTM">
    <text evidence="1">Transiently phosphorylated on a His residue during the reaction cycle. Phosphorylation strongly increases the affinity for substrates and increases the rate of nicotinate D-ribonucleotide production. Dephosphorylation regenerates the low-affinity form of the enzyme, leading to product release.</text>
</comment>
<comment type="similarity">
    <text evidence="1">Belongs to the NAPRTase family.</text>
</comment>
<organism>
    <name type="scientific">Agrobacterium fabrum (strain C58 / ATCC 33970)</name>
    <name type="common">Agrobacterium tumefaciens (strain C58)</name>
    <dbReference type="NCBI Taxonomy" id="176299"/>
    <lineage>
        <taxon>Bacteria</taxon>
        <taxon>Pseudomonadati</taxon>
        <taxon>Pseudomonadota</taxon>
        <taxon>Alphaproteobacteria</taxon>
        <taxon>Hyphomicrobiales</taxon>
        <taxon>Rhizobiaceae</taxon>
        <taxon>Rhizobium/Agrobacterium group</taxon>
        <taxon>Agrobacterium</taxon>
        <taxon>Agrobacterium tumefaciens complex</taxon>
    </lineage>
</organism>
<accession>Q8UIS9</accession>
<name>PNCB_AGRFC</name>
<dbReference type="EC" id="6.3.4.21" evidence="1"/>
<dbReference type="EMBL" id="AE007869">
    <property type="protein sequence ID" value="AAK86031.2"/>
    <property type="molecule type" value="Genomic_DNA"/>
</dbReference>
<dbReference type="PIR" id="AF2602">
    <property type="entry name" value="AF2602"/>
</dbReference>
<dbReference type="PIR" id="F97384">
    <property type="entry name" value="F97384"/>
</dbReference>
<dbReference type="RefSeq" id="NP_353246.2">
    <property type="nucleotide sequence ID" value="NC_003062.2"/>
</dbReference>
<dbReference type="RefSeq" id="WP_010970734.1">
    <property type="nucleotide sequence ID" value="NC_003062.2"/>
</dbReference>
<dbReference type="PDB" id="1YBE">
    <property type="method" value="X-ray"/>
    <property type="resolution" value="2.50 A"/>
    <property type="chains" value="A/B=1-434"/>
</dbReference>
<dbReference type="PDBsum" id="1YBE"/>
<dbReference type="SMR" id="Q8UIS9"/>
<dbReference type="STRING" id="176299.Atu0213"/>
<dbReference type="DNASU" id="1132251"/>
<dbReference type="EnsemblBacteria" id="AAK86031">
    <property type="protein sequence ID" value="AAK86031"/>
    <property type="gene ID" value="Atu0213"/>
</dbReference>
<dbReference type="GeneID" id="1132251"/>
<dbReference type="KEGG" id="atu:Atu0213"/>
<dbReference type="PATRIC" id="fig|176299.10.peg.204"/>
<dbReference type="eggNOG" id="COG1488">
    <property type="taxonomic scope" value="Bacteria"/>
</dbReference>
<dbReference type="HOGENOM" id="CLU_030991_1_0_5"/>
<dbReference type="OrthoDB" id="9771406at2"/>
<dbReference type="PhylomeDB" id="Q8UIS9"/>
<dbReference type="UniPathway" id="UPA00253">
    <property type="reaction ID" value="UER00457"/>
</dbReference>
<dbReference type="EvolutionaryTrace" id="Q8UIS9"/>
<dbReference type="Proteomes" id="UP000000813">
    <property type="component" value="Chromosome circular"/>
</dbReference>
<dbReference type="GO" id="GO:0005829">
    <property type="term" value="C:cytosol"/>
    <property type="evidence" value="ECO:0007669"/>
    <property type="project" value="TreeGrafter"/>
</dbReference>
<dbReference type="GO" id="GO:0004516">
    <property type="term" value="F:nicotinate phosphoribosyltransferase activity"/>
    <property type="evidence" value="ECO:0007669"/>
    <property type="project" value="UniProtKB-UniRule"/>
</dbReference>
<dbReference type="GO" id="GO:0034355">
    <property type="term" value="P:NAD biosynthetic process via the salvage pathway"/>
    <property type="evidence" value="ECO:0007669"/>
    <property type="project" value="TreeGrafter"/>
</dbReference>
<dbReference type="Gene3D" id="3.20.140.10">
    <property type="entry name" value="nicotinate phosphoribosyltransferase"/>
    <property type="match status" value="1"/>
</dbReference>
<dbReference type="HAMAP" id="MF_00570">
    <property type="entry name" value="NAPRTase"/>
    <property type="match status" value="1"/>
</dbReference>
<dbReference type="InterPro" id="IPR041525">
    <property type="entry name" value="N/Namide_PRibTrfase"/>
</dbReference>
<dbReference type="InterPro" id="IPR040727">
    <property type="entry name" value="NAPRTase_N"/>
</dbReference>
<dbReference type="InterPro" id="IPR006406">
    <property type="entry name" value="Nic_PRibTrfase"/>
</dbReference>
<dbReference type="InterPro" id="IPR007229">
    <property type="entry name" value="Nic_PRibTrfase-Fam"/>
</dbReference>
<dbReference type="InterPro" id="IPR036068">
    <property type="entry name" value="Nicotinate_pribotase-like_C"/>
</dbReference>
<dbReference type="NCBIfam" id="TIGR01514">
    <property type="entry name" value="NAPRTase"/>
    <property type="match status" value="1"/>
</dbReference>
<dbReference type="NCBIfam" id="NF003704">
    <property type="entry name" value="PRK05321.1"/>
    <property type="match status" value="1"/>
</dbReference>
<dbReference type="PANTHER" id="PTHR11098">
    <property type="entry name" value="NICOTINATE PHOSPHORIBOSYLTRANSFERASE"/>
    <property type="match status" value="1"/>
</dbReference>
<dbReference type="PANTHER" id="PTHR11098:SF1">
    <property type="entry name" value="NICOTINATE PHOSPHORIBOSYLTRANSFERASE"/>
    <property type="match status" value="1"/>
</dbReference>
<dbReference type="Pfam" id="PF04095">
    <property type="entry name" value="NAPRTase"/>
    <property type="match status" value="1"/>
</dbReference>
<dbReference type="Pfam" id="PF17767">
    <property type="entry name" value="NAPRTase_N"/>
    <property type="match status" value="1"/>
</dbReference>
<dbReference type="PIRSF" id="PIRSF000484">
    <property type="entry name" value="NAPRT"/>
    <property type="match status" value="1"/>
</dbReference>
<dbReference type="SUPFAM" id="SSF51690">
    <property type="entry name" value="Nicotinate/Quinolinate PRTase C-terminal domain-like"/>
    <property type="match status" value="1"/>
</dbReference>
<dbReference type="SUPFAM" id="SSF54675">
    <property type="entry name" value="Nicotinate/Quinolinate PRTase N-terminal domain-like"/>
    <property type="match status" value="1"/>
</dbReference>
<evidence type="ECO:0000255" key="1">
    <source>
        <dbReference type="HAMAP-Rule" id="MF_00570"/>
    </source>
</evidence>
<evidence type="ECO:0007829" key="2">
    <source>
        <dbReference type="PDB" id="1YBE"/>
    </source>
</evidence>
<keyword id="KW-0002">3D-structure</keyword>
<keyword id="KW-0436">Ligase</keyword>
<keyword id="KW-0597">Phosphoprotein</keyword>
<keyword id="KW-0662">Pyridine nucleotide biosynthesis</keyword>
<keyword id="KW-1185">Reference proteome</keyword>
<sequence>MTKTDIATRVHNHTWKLDPIVRSLIDTDFYKLLMLQMIWKLYPEVDATFSLINRTKTVRLAEEIDEMELREQLDHARTLRLSKKENIWLAGNTFYGRSQIFEPEFLSWLSSYQLPEYELFKRDGQYELNFHGRWMDTTLWEIPALSIINELRSRSAMRSLGYFTLDVLYARAKAKMWEKVERLRELPGLRISDFGTRRRHSFLWQRWCVEALKEGIGPAFTGTSNVLLAMDSDLEAVGTNAHELPMVVAALAQTNEELAAAPYQVLKDWNRLYGGNLLIVLPDAFGTAAFLRNAPEWVADWTGFRPDSAPPIEGGEKIIEWWRKMGRDPRTKMLIFSDGLDVDAIVDTYRHFEGRVRMSFGWGTNLTNDFAGCAPKTIASLKPISIVCKVSDANGRPAVKLSDNPQKATGDPAEVERYLKFFGEEDHKEQKVLV</sequence>
<reference key="1">
    <citation type="journal article" date="2001" name="Science">
        <title>The genome of the natural genetic engineer Agrobacterium tumefaciens C58.</title>
        <authorList>
            <person name="Wood D.W."/>
            <person name="Setubal J.C."/>
            <person name="Kaul R."/>
            <person name="Monks D.E."/>
            <person name="Kitajima J.P."/>
            <person name="Okura V.K."/>
            <person name="Zhou Y."/>
            <person name="Chen L."/>
            <person name="Wood G.E."/>
            <person name="Almeida N.F. Jr."/>
            <person name="Woo L."/>
            <person name="Chen Y."/>
            <person name="Paulsen I.T."/>
            <person name="Eisen J.A."/>
            <person name="Karp P.D."/>
            <person name="Bovee D. Sr."/>
            <person name="Chapman P."/>
            <person name="Clendenning J."/>
            <person name="Deatherage G."/>
            <person name="Gillet W."/>
            <person name="Grant C."/>
            <person name="Kutyavin T."/>
            <person name="Levy R."/>
            <person name="Li M.-J."/>
            <person name="McClelland E."/>
            <person name="Palmieri A."/>
            <person name="Raymond C."/>
            <person name="Rouse G."/>
            <person name="Saenphimmachak C."/>
            <person name="Wu Z."/>
            <person name="Romero P."/>
            <person name="Gordon D."/>
            <person name="Zhang S."/>
            <person name="Yoo H."/>
            <person name="Tao Y."/>
            <person name="Biddle P."/>
            <person name="Jung M."/>
            <person name="Krespan W."/>
            <person name="Perry M."/>
            <person name="Gordon-Kamm B."/>
            <person name="Liao L."/>
            <person name="Kim S."/>
            <person name="Hendrick C."/>
            <person name="Zhao Z.-Y."/>
            <person name="Dolan M."/>
            <person name="Chumley F."/>
            <person name="Tingey S.V."/>
            <person name="Tomb J.-F."/>
            <person name="Gordon M.P."/>
            <person name="Olson M.V."/>
            <person name="Nester E.W."/>
        </authorList>
    </citation>
    <scope>NUCLEOTIDE SEQUENCE [LARGE SCALE GENOMIC DNA]</scope>
    <source>
        <strain>C58 / ATCC 33970</strain>
    </source>
</reference>
<reference key="2">
    <citation type="journal article" date="2001" name="Science">
        <title>Genome sequence of the plant pathogen and biotechnology agent Agrobacterium tumefaciens C58.</title>
        <authorList>
            <person name="Goodner B."/>
            <person name="Hinkle G."/>
            <person name="Gattung S."/>
            <person name="Miller N."/>
            <person name="Blanchard M."/>
            <person name="Qurollo B."/>
            <person name="Goldman B.S."/>
            <person name="Cao Y."/>
            <person name="Askenazi M."/>
            <person name="Halling C."/>
            <person name="Mullin L."/>
            <person name="Houmiel K."/>
            <person name="Gordon J."/>
            <person name="Vaudin M."/>
            <person name="Iartchouk O."/>
            <person name="Epp A."/>
            <person name="Liu F."/>
            <person name="Wollam C."/>
            <person name="Allinger M."/>
            <person name="Doughty D."/>
            <person name="Scott C."/>
            <person name="Lappas C."/>
            <person name="Markelz B."/>
            <person name="Flanagan C."/>
            <person name="Crowell C."/>
            <person name="Gurson J."/>
            <person name="Lomo C."/>
            <person name="Sear C."/>
            <person name="Strub G."/>
            <person name="Cielo C."/>
            <person name="Slater S."/>
        </authorList>
    </citation>
    <scope>NUCLEOTIDE SEQUENCE [LARGE SCALE GENOMIC DNA]</scope>
    <source>
        <strain>C58 / ATCC 33970</strain>
    </source>
</reference>
<feature type="chain" id="PRO_0000205817" description="Nicotinate phosphoribosyltransferase">
    <location>
        <begin position="1"/>
        <end position="434"/>
    </location>
</feature>
<feature type="modified residue" description="Phosphohistidine; by autocatalysis" evidence="1">
    <location>
        <position position="242"/>
    </location>
</feature>
<feature type="helix" evidence="2">
    <location>
        <begin position="2"/>
        <end position="7"/>
    </location>
</feature>
<feature type="helix" evidence="2">
    <location>
        <begin position="29"/>
        <end position="41"/>
    </location>
</feature>
<feature type="strand" evidence="2">
    <location>
        <begin position="46"/>
        <end position="54"/>
    </location>
</feature>
<feature type="turn" evidence="2">
    <location>
        <begin position="61"/>
        <end position="63"/>
    </location>
</feature>
<feature type="helix" evidence="2">
    <location>
        <begin position="66"/>
        <end position="76"/>
    </location>
</feature>
<feature type="helix" evidence="2">
    <location>
        <begin position="83"/>
        <end position="91"/>
    </location>
</feature>
<feature type="strand" evidence="2">
    <location>
        <begin position="94"/>
        <end position="96"/>
    </location>
</feature>
<feature type="helix" evidence="2">
    <location>
        <begin position="103"/>
        <end position="110"/>
    </location>
</feature>
<feature type="strand" evidence="2">
    <location>
        <begin position="118"/>
        <end position="121"/>
    </location>
</feature>
<feature type="strand" evidence="2">
    <location>
        <begin position="126"/>
        <end position="130"/>
    </location>
</feature>
<feature type="helix" evidence="2">
    <location>
        <begin position="134"/>
        <end position="137"/>
    </location>
</feature>
<feature type="helix" evidence="2">
    <location>
        <begin position="138"/>
        <end position="140"/>
    </location>
</feature>
<feature type="helix" evidence="2">
    <location>
        <begin position="141"/>
        <end position="157"/>
    </location>
</feature>
<feature type="helix" evidence="2">
    <location>
        <begin position="162"/>
        <end position="183"/>
    </location>
</feature>
<feature type="strand" evidence="2">
    <location>
        <begin position="191"/>
        <end position="193"/>
    </location>
</feature>
<feature type="turn" evidence="2">
    <location>
        <begin position="196"/>
        <end position="198"/>
    </location>
</feature>
<feature type="helix" evidence="2">
    <location>
        <begin position="202"/>
        <end position="216"/>
    </location>
</feature>
<feature type="helix" evidence="2">
    <location>
        <begin position="217"/>
        <end position="219"/>
    </location>
</feature>
<feature type="strand" evidence="2">
    <location>
        <begin position="220"/>
        <end position="225"/>
    </location>
</feature>
<feature type="helix" evidence="2">
    <location>
        <begin position="226"/>
        <end position="232"/>
    </location>
</feature>
<feature type="helix" evidence="2">
    <location>
        <begin position="243"/>
        <end position="251"/>
    </location>
</feature>
<feature type="helix" evidence="2">
    <location>
        <begin position="255"/>
        <end position="272"/>
    </location>
</feature>
<feature type="helix" evidence="2">
    <location>
        <begin position="275"/>
        <end position="277"/>
    </location>
</feature>
<feature type="helix" evidence="2">
    <location>
        <begin position="287"/>
        <end position="292"/>
    </location>
</feature>
<feature type="helix" evidence="2">
    <location>
        <begin position="296"/>
        <end position="300"/>
    </location>
</feature>
<feature type="strand" evidence="2">
    <location>
        <begin position="301"/>
        <end position="304"/>
    </location>
</feature>
<feature type="helix" evidence="2">
    <location>
        <begin position="311"/>
        <end position="324"/>
    </location>
</feature>
<feature type="helix" evidence="2">
    <location>
        <begin position="329"/>
        <end position="331"/>
    </location>
</feature>
<feature type="strand" evidence="2">
    <location>
        <begin position="332"/>
        <end position="336"/>
    </location>
</feature>
<feature type="helix" evidence="2">
    <location>
        <begin position="342"/>
        <end position="352"/>
    </location>
</feature>
<feature type="turn" evidence="2">
    <location>
        <begin position="353"/>
        <end position="355"/>
    </location>
</feature>
<feature type="strand" evidence="2">
    <location>
        <begin position="356"/>
        <end position="362"/>
    </location>
</feature>
<feature type="helix" evidence="2">
    <location>
        <begin position="364"/>
        <end position="367"/>
    </location>
</feature>
<feature type="strand" evidence="2">
    <location>
        <begin position="386"/>
        <end position="393"/>
    </location>
</feature>
<feature type="helix" evidence="2">
    <location>
        <begin position="405"/>
        <end position="407"/>
    </location>
</feature>
<feature type="helix" evidence="2">
    <location>
        <begin position="412"/>
        <end position="422"/>
    </location>
</feature>
<gene>
    <name evidence="1" type="primary">pncB</name>
    <name type="ordered locus">Atu0213</name>
    <name type="ORF">AGR_C_367</name>
</gene>